<evidence type="ECO:0000255" key="1">
    <source>
        <dbReference type="HAMAP-Rule" id="MF_01427"/>
    </source>
</evidence>
<evidence type="ECO:0000255" key="2">
    <source>
        <dbReference type="PROSITE-ProRule" id="PRU01175"/>
    </source>
</evidence>
<keyword id="KW-0269">Exonuclease</keyword>
<keyword id="KW-0378">Hydrolase</keyword>
<keyword id="KW-0540">Nuclease</keyword>
<name>YHAM_BACC3</name>
<organism>
    <name type="scientific">Bacillus cereus (strain 03BB102)</name>
    <dbReference type="NCBI Taxonomy" id="572264"/>
    <lineage>
        <taxon>Bacteria</taxon>
        <taxon>Bacillati</taxon>
        <taxon>Bacillota</taxon>
        <taxon>Bacilli</taxon>
        <taxon>Bacillales</taxon>
        <taxon>Bacillaceae</taxon>
        <taxon>Bacillus</taxon>
        <taxon>Bacillus cereus group</taxon>
    </lineage>
</organism>
<dbReference type="EC" id="3.1.-.-" evidence="1"/>
<dbReference type="EMBL" id="CP001407">
    <property type="protein sequence ID" value="ACO25931.1"/>
    <property type="molecule type" value="Genomic_DNA"/>
</dbReference>
<dbReference type="RefSeq" id="WP_000726643.1">
    <property type="nucleotide sequence ID" value="NZ_CP009318.1"/>
</dbReference>
<dbReference type="SMR" id="C1EKC8"/>
<dbReference type="KEGG" id="bcx:BCA_1048"/>
<dbReference type="PATRIC" id="fig|572264.18.peg.994"/>
<dbReference type="Proteomes" id="UP000002210">
    <property type="component" value="Chromosome"/>
</dbReference>
<dbReference type="GO" id="GO:0000175">
    <property type="term" value="F:3'-5'-RNA exonuclease activity"/>
    <property type="evidence" value="ECO:0007669"/>
    <property type="project" value="UniProtKB-UniRule"/>
</dbReference>
<dbReference type="GO" id="GO:0003676">
    <property type="term" value="F:nucleic acid binding"/>
    <property type="evidence" value="ECO:0007669"/>
    <property type="project" value="InterPro"/>
</dbReference>
<dbReference type="GO" id="GO:0031125">
    <property type="term" value="P:rRNA 3'-end processing"/>
    <property type="evidence" value="ECO:0007669"/>
    <property type="project" value="TreeGrafter"/>
</dbReference>
<dbReference type="CDD" id="cd00077">
    <property type="entry name" value="HDc"/>
    <property type="match status" value="1"/>
</dbReference>
<dbReference type="CDD" id="cd04492">
    <property type="entry name" value="YhaM_OBF_like"/>
    <property type="match status" value="1"/>
</dbReference>
<dbReference type="FunFam" id="1.10.3210.10:FF:000008">
    <property type="entry name" value="3'-5' exoribonuclease YhaM"/>
    <property type="match status" value="1"/>
</dbReference>
<dbReference type="Gene3D" id="1.10.3210.10">
    <property type="entry name" value="Hypothetical protein af1432"/>
    <property type="match status" value="1"/>
</dbReference>
<dbReference type="Gene3D" id="2.40.50.140">
    <property type="entry name" value="Nucleic acid-binding proteins"/>
    <property type="match status" value="1"/>
</dbReference>
<dbReference type="HAMAP" id="MF_01427">
    <property type="entry name" value="3_5_Exoribonuc_YhaM"/>
    <property type="match status" value="1"/>
</dbReference>
<dbReference type="InterPro" id="IPR020873">
    <property type="entry name" value="3'-5'_exoribonuclease_YhaM"/>
</dbReference>
<dbReference type="InterPro" id="IPR003607">
    <property type="entry name" value="HD/PDEase_dom"/>
</dbReference>
<dbReference type="InterPro" id="IPR006674">
    <property type="entry name" value="HD_domain"/>
</dbReference>
<dbReference type="InterPro" id="IPR012340">
    <property type="entry name" value="NA-bd_OB-fold"/>
</dbReference>
<dbReference type="InterPro" id="IPR004365">
    <property type="entry name" value="NA-bd_OB_tRNA"/>
</dbReference>
<dbReference type="InterPro" id="IPR050798">
    <property type="entry name" value="YhaM_exoribonuc/phosphodiest"/>
</dbReference>
<dbReference type="NCBIfam" id="NF010007">
    <property type="entry name" value="PRK13480.1"/>
    <property type="match status" value="1"/>
</dbReference>
<dbReference type="PANTHER" id="PTHR37294">
    <property type="entry name" value="3'-5' EXORIBONUCLEASE YHAM"/>
    <property type="match status" value="1"/>
</dbReference>
<dbReference type="PANTHER" id="PTHR37294:SF1">
    <property type="entry name" value="3'-5' EXORIBONUCLEASE YHAM"/>
    <property type="match status" value="1"/>
</dbReference>
<dbReference type="Pfam" id="PF01966">
    <property type="entry name" value="HD"/>
    <property type="match status" value="1"/>
</dbReference>
<dbReference type="Pfam" id="PF01336">
    <property type="entry name" value="tRNA_anti-codon"/>
    <property type="match status" value="1"/>
</dbReference>
<dbReference type="SMART" id="SM00471">
    <property type="entry name" value="HDc"/>
    <property type="match status" value="1"/>
</dbReference>
<dbReference type="SUPFAM" id="SSF109604">
    <property type="entry name" value="HD-domain/PDEase-like"/>
    <property type="match status" value="1"/>
</dbReference>
<dbReference type="SUPFAM" id="SSF50249">
    <property type="entry name" value="Nucleic acid-binding proteins"/>
    <property type="match status" value="1"/>
</dbReference>
<dbReference type="PROSITE" id="PS51831">
    <property type="entry name" value="HD"/>
    <property type="match status" value="1"/>
</dbReference>
<gene>
    <name evidence="1" type="primary">yhaM</name>
    <name type="ordered locus">BCA_1048</name>
</gene>
<accession>C1EKC8</accession>
<comment type="function">
    <text evidence="1">Shows a 3'-5' exoribonuclease activity.</text>
</comment>
<comment type="similarity">
    <text evidence="1">Belongs to the YhaM family.</text>
</comment>
<sequence>MKKKIAEYEVGEQVDVFLLIKTATKGIASNGKPFLTVILQDPSGDIEAKLWDVSPEVEKQYVAETIVKVAGDILNYKGRIQLRVKQIRVANENEVTDISDFVEKAPVKKEDMVEKITQYIFEMRNPNIQRLTRHLLNKHQNEFLEYPAATKNHHEFVSGLAYHVVSMLDLAKAISNLYPSLDKDLLYAGVILHDLGKVIELSGPISTTYTLEGNLLGHISIMVNEIGKAADELQIDAEEVLILQHIVLSHHGKAEWGSPKPPLVKEAEILHYIDNLDAKMNMMDRALGRTKPGEYTERVFALDNRSFYKPSFHN</sequence>
<protein>
    <recommendedName>
        <fullName evidence="1">3'-5' exoribonuclease YhaM</fullName>
        <ecNumber evidence="1">3.1.-.-</ecNumber>
    </recommendedName>
</protein>
<proteinExistence type="inferred from homology"/>
<feature type="chain" id="PRO_1000184882" description="3'-5' exoribonuclease YhaM">
    <location>
        <begin position="1"/>
        <end position="314"/>
    </location>
</feature>
<feature type="domain" description="HD" evidence="2">
    <location>
        <begin position="163"/>
        <end position="279"/>
    </location>
</feature>
<reference key="1">
    <citation type="submission" date="2009-02" db="EMBL/GenBank/DDBJ databases">
        <title>Genome sequence of Bacillus cereus 03BB102.</title>
        <authorList>
            <person name="Dodson R.J."/>
            <person name="Jackson P."/>
            <person name="Munk A.C."/>
            <person name="Brettin T."/>
            <person name="Bruce D."/>
            <person name="Detter C."/>
            <person name="Tapia R."/>
            <person name="Han C."/>
            <person name="Sutton G."/>
            <person name="Sims D."/>
        </authorList>
    </citation>
    <scope>NUCLEOTIDE SEQUENCE [LARGE SCALE GENOMIC DNA]</scope>
    <source>
        <strain>03BB102</strain>
    </source>
</reference>